<accession>Q8UE04</accession>
<gene>
    <name evidence="1" type="primary">rplK</name>
    <name type="ordered locus">Atu1960</name>
    <name type="ORF">AGR_C_3575</name>
</gene>
<proteinExistence type="inferred from homology"/>
<keyword id="KW-0488">Methylation</keyword>
<keyword id="KW-1185">Reference proteome</keyword>
<keyword id="KW-0687">Ribonucleoprotein</keyword>
<keyword id="KW-0689">Ribosomal protein</keyword>
<keyword id="KW-0694">RNA-binding</keyword>
<keyword id="KW-0699">rRNA-binding</keyword>
<dbReference type="EMBL" id="AE007869">
    <property type="protein sequence ID" value="AAK87720.1"/>
    <property type="molecule type" value="Genomic_DNA"/>
</dbReference>
<dbReference type="PIR" id="AF2817">
    <property type="entry name" value="AF2817"/>
</dbReference>
<dbReference type="PIR" id="G97595">
    <property type="entry name" value="G97595"/>
</dbReference>
<dbReference type="RefSeq" id="NP_354935.1">
    <property type="nucleotide sequence ID" value="NC_003062.2"/>
</dbReference>
<dbReference type="RefSeq" id="WP_006316435.1">
    <property type="nucleotide sequence ID" value="NC_003062.2"/>
</dbReference>
<dbReference type="SMR" id="Q8UE04"/>
<dbReference type="STRING" id="176299.Atu1960"/>
<dbReference type="EnsemblBacteria" id="AAK87720">
    <property type="protein sequence ID" value="AAK87720"/>
    <property type="gene ID" value="Atu1960"/>
</dbReference>
<dbReference type="GeneID" id="1133998"/>
<dbReference type="KEGG" id="atu:Atu1960"/>
<dbReference type="PATRIC" id="fig|176299.10.peg.1973"/>
<dbReference type="eggNOG" id="COG0080">
    <property type="taxonomic scope" value="Bacteria"/>
</dbReference>
<dbReference type="HOGENOM" id="CLU_074237_2_0_5"/>
<dbReference type="OrthoDB" id="9802408at2"/>
<dbReference type="PhylomeDB" id="Q8UE04"/>
<dbReference type="BioCyc" id="AGRO:ATU1960-MONOMER"/>
<dbReference type="Proteomes" id="UP000000813">
    <property type="component" value="Chromosome circular"/>
</dbReference>
<dbReference type="GO" id="GO:0022625">
    <property type="term" value="C:cytosolic large ribosomal subunit"/>
    <property type="evidence" value="ECO:0007669"/>
    <property type="project" value="TreeGrafter"/>
</dbReference>
<dbReference type="GO" id="GO:0070180">
    <property type="term" value="F:large ribosomal subunit rRNA binding"/>
    <property type="evidence" value="ECO:0007669"/>
    <property type="project" value="UniProtKB-UniRule"/>
</dbReference>
<dbReference type="GO" id="GO:0003735">
    <property type="term" value="F:structural constituent of ribosome"/>
    <property type="evidence" value="ECO:0007669"/>
    <property type="project" value="InterPro"/>
</dbReference>
<dbReference type="GO" id="GO:0006412">
    <property type="term" value="P:translation"/>
    <property type="evidence" value="ECO:0007669"/>
    <property type="project" value="UniProtKB-UniRule"/>
</dbReference>
<dbReference type="CDD" id="cd00349">
    <property type="entry name" value="Ribosomal_L11"/>
    <property type="match status" value="1"/>
</dbReference>
<dbReference type="FunFam" id="3.30.1550.10:FF:000001">
    <property type="entry name" value="50S ribosomal protein L11"/>
    <property type="match status" value="1"/>
</dbReference>
<dbReference type="Gene3D" id="1.10.10.250">
    <property type="entry name" value="Ribosomal protein L11, C-terminal domain"/>
    <property type="match status" value="1"/>
</dbReference>
<dbReference type="Gene3D" id="3.30.1550.10">
    <property type="entry name" value="Ribosomal protein L11/L12, N-terminal domain"/>
    <property type="match status" value="1"/>
</dbReference>
<dbReference type="HAMAP" id="MF_00736">
    <property type="entry name" value="Ribosomal_uL11"/>
    <property type="match status" value="1"/>
</dbReference>
<dbReference type="InterPro" id="IPR000911">
    <property type="entry name" value="Ribosomal_uL11"/>
</dbReference>
<dbReference type="InterPro" id="IPR006519">
    <property type="entry name" value="Ribosomal_uL11_bac-typ"/>
</dbReference>
<dbReference type="InterPro" id="IPR020783">
    <property type="entry name" value="Ribosomal_uL11_C"/>
</dbReference>
<dbReference type="InterPro" id="IPR036769">
    <property type="entry name" value="Ribosomal_uL11_C_sf"/>
</dbReference>
<dbReference type="InterPro" id="IPR020784">
    <property type="entry name" value="Ribosomal_uL11_N"/>
</dbReference>
<dbReference type="InterPro" id="IPR036796">
    <property type="entry name" value="Ribosomal_uL11_N_sf"/>
</dbReference>
<dbReference type="NCBIfam" id="TIGR01632">
    <property type="entry name" value="L11_bact"/>
    <property type="match status" value="1"/>
</dbReference>
<dbReference type="PANTHER" id="PTHR11661">
    <property type="entry name" value="60S RIBOSOMAL PROTEIN L12"/>
    <property type="match status" value="1"/>
</dbReference>
<dbReference type="PANTHER" id="PTHR11661:SF1">
    <property type="entry name" value="LARGE RIBOSOMAL SUBUNIT PROTEIN UL11M"/>
    <property type="match status" value="1"/>
</dbReference>
<dbReference type="Pfam" id="PF00298">
    <property type="entry name" value="Ribosomal_L11"/>
    <property type="match status" value="1"/>
</dbReference>
<dbReference type="Pfam" id="PF03946">
    <property type="entry name" value="Ribosomal_L11_N"/>
    <property type="match status" value="1"/>
</dbReference>
<dbReference type="SMART" id="SM00649">
    <property type="entry name" value="RL11"/>
    <property type="match status" value="1"/>
</dbReference>
<dbReference type="SUPFAM" id="SSF54747">
    <property type="entry name" value="Ribosomal L11/L12e N-terminal domain"/>
    <property type="match status" value="1"/>
</dbReference>
<dbReference type="SUPFAM" id="SSF46906">
    <property type="entry name" value="Ribosomal protein L11, C-terminal domain"/>
    <property type="match status" value="1"/>
</dbReference>
<comment type="function">
    <text evidence="1">Forms part of the ribosomal stalk which helps the ribosome interact with GTP-bound translation factors.</text>
</comment>
<comment type="subunit">
    <text>Part of the ribosomal stalk of the 50S ribosomal subunit. Interacts with L10 and the large rRNA to form the base of the stalk. L10 forms an elongated spine to which 2 L12 dimers bind in a sequential fashion forming a pentameric L10(L12)2(L12)2 complex.</text>
</comment>
<comment type="PTM">
    <text evidence="1">One or more lysine residues are methylated.</text>
</comment>
<comment type="similarity">
    <text evidence="1">Belongs to the universal ribosomal protein uL11 family.</text>
</comment>
<organism>
    <name type="scientific">Agrobacterium fabrum (strain C58 / ATCC 33970)</name>
    <name type="common">Agrobacterium tumefaciens (strain C58)</name>
    <dbReference type="NCBI Taxonomy" id="176299"/>
    <lineage>
        <taxon>Bacteria</taxon>
        <taxon>Pseudomonadati</taxon>
        <taxon>Pseudomonadota</taxon>
        <taxon>Alphaproteobacteria</taxon>
        <taxon>Hyphomicrobiales</taxon>
        <taxon>Rhizobiaceae</taxon>
        <taxon>Rhizobium/Agrobacterium group</taxon>
        <taxon>Agrobacterium</taxon>
        <taxon>Agrobacterium tumefaciens complex</taxon>
    </lineage>
</organism>
<evidence type="ECO:0000255" key="1">
    <source>
        <dbReference type="HAMAP-Rule" id="MF_00736"/>
    </source>
</evidence>
<evidence type="ECO:0000305" key="2"/>
<name>RL11_AGRFC</name>
<feature type="chain" id="PRO_0000104232" description="Large ribosomal subunit protein uL11">
    <location>
        <begin position="1"/>
        <end position="143"/>
    </location>
</feature>
<reference key="1">
    <citation type="journal article" date="2001" name="Science">
        <title>The genome of the natural genetic engineer Agrobacterium tumefaciens C58.</title>
        <authorList>
            <person name="Wood D.W."/>
            <person name="Setubal J.C."/>
            <person name="Kaul R."/>
            <person name="Monks D.E."/>
            <person name="Kitajima J.P."/>
            <person name="Okura V.K."/>
            <person name="Zhou Y."/>
            <person name="Chen L."/>
            <person name="Wood G.E."/>
            <person name="Almeida N.F. Jr."/>
            <person name="Woo L."/>
            <person name="Chen Y."/>
            <person name="Paulsen I.T."/>
            <person name="Eisen J.A."/>
            <person name="Karp P.D."/>
            <person name="Bovee D. Sr."/>
            <person name="Chapman P."/>
            <person name="Clendenning J."/>
            <person name="Deatherage G."/>
            <person name="Gillet W."/>
            <person name="Grant C."/>
            <person name="Kutyavin T."/>
            <person name="Levy R."/>
            <person name="Li M.-J."/>
            <person name="McClelland E."/>
            <person name="Palmieri A."/>
            <person name="Raymond C."/>
            <person name="Rouse G."/>
            <person name="Saenphimmachak C."/>
            <person name="Wu Z."/>
            <person name="Romero P."/>
            <person name="Gordon D."/>
            <person name="Zhang S."/>
            <person name="Yoo H."/>
            <person name="Tao Y."/>
            <person name="Biddle P."/>
            <person name="Jung M."/>
            <person name="Krespan W."/>
            <person name="Perry M."/>
            <person name="Gordon-Kamm B."/>
            <person name="Liao L."/>
            <person name="Kim S."/>
            <person name="Hendrick C."/>
            <person name="Zhao Z.-Y."/>
            <person name="Dolan M."/>
            <person name="Chumley F."/>
            <person name="Tingey S.V."/>
            <person name="Tomb J.-F."/>
            <person name="Gordon M.P."/>
            <person name="Olson M.V."/>
            <person name="Nester E.W."/>
        </authorList>
    </citation>
    <scope>NUCLEOTIDE SEQUENCE [LARGE SCALE GENOMIC DNA]</scope>
    <source>
        <strain>C58 / ATCC 33970</strain>
    </source>
</reference>
<reference key="2">
    <citation type="journal article" date="2001" name="Science">
        <title>Genome sequence of the plant pathogen and biotechnology agent Agrobacterium tumefaciens C58.</title>
        <authorList>
            <person name="Goodner B."/>
            <person name="Hinkle G."/>
            <person name="Gattung S."/>
            <person name="Miller N."/>
            <person name="Blanchard M."/>
            <person name="Qurollo B."/>
            <person name="Goldman B.S."/>
            <person name="Cao Y."/>
            <person name="Askenazi M."/>
            <person name="Halling C."/>
            <person name="Mullin L."/>
            <person name="Houmiel K."/>
            <person name="Gordon J."/>
            <person name="Vaudin M."/>
            <person name="Iartchouk O."/>
            <person name="Epp A."/>
            <person name="Liu F."/>
            <person name="Wollam C."/>
            <person name="Allinger M."/>
            <person name="Doughty D."/>
            <person name="Scott C."/>
            <person name="Lappas C."/>
            <person name="Markelz B."/>
            <person name="Flanagan C."/>
            <person name="Crowell C."/>
            <person name="Gurson J."/>
            <person name="Lomo C."/>
            <person name="Sear C."/>
            <person name="Strub G."/>
            <person name="Cielo C."/>
            <person name="Slater S."/>
        </authorList>
    </citation>
    <scope>NUCLEOTIDE SEQUENCE [LARGE SCALE GENOMIC DNA]</scope>
    <source>
        <strain>C58 / ATCC 33970</strain>
    </source>
</reference>
<protein>
    <recommendedName>
        <fullName evidence="1">Large ribosomal subunit protein uL11</fullName>
    </recommendedName>
    <alternativeName>
        <fullName evidence="2">50S ribosomal protein L11</fullName>
    </alternativeName>
</protein>
<sequence>MAKKVAGQLKLQVKAGSANPSPPIGPALGQRGINIMEFCKAFNAATQEMEKGMPIPVVITYYQDKSFTFAMKQPPMTYWLKKEAKITSGSKTPGKGAKVGSITKAQVKTIAEAKMKDLNAADIEGAMAMVEGSARAMGLEVVG</sequence>